<proteinExistence type="inferred from homology"/>
<feature type="chain" id="PRO_1000079787" description="Large ribosomal subunit protein bL12">
    <location>
        <begin position="1"/>
        <end position="121"/>
    </location>
</feature>
<gene>
    <name evidence="1" type="primary">rplL</name>
    <name type="ordered locus">Cbei_0143</name>
</gene>
<accession>A6LPQ3</accession>
<reference key="1">
    <citation type="submission" date="2007-06" db="EMBL/GenBank/DDBJ databases">
        <title>Complete sequence of Clostridium beijerinckii NCIMB 8052.</title>
        <authorList>
            <consortium name="US DOE Joint Genome Institute"/>
            <person name="Copeland A."/>
            <person name="Lucas S."/>
            <person name="Lapidus A."/>
            <person name="Barry K."/>
            <person name="Detter J.C."/>
            <person name="Glavina del Rio T."/>
            <person name="Hammon N."/>
            <person name="Israni S."/>
            <person name="Dalin E."/>
            <person name="Tice H."/>
            <person name="Pitluck S."/>
            <person name="Sims D."/>
            <person name="Brettin T."/>
            <person name="Bruce D."/>
            <person name="Tapia R."/>
            <person name="Brainard J."/>
            <person name="Schmutz J."/>
            <person name="Larimer F."/>
            <person name="Land M."/>
            <person name="Hauser L."/>
            <person name="Kyrpides N."/>
            <person name="Mikhailova N."/>
            <person name="Bennet G."/>
            <person name="Cann I."/>
            <person name="Chen J.-S."/>
            <person name="Contreras A.L."/>
            <person name="Jones D."/>
            <person name="Kashket E."/>
            <person name="Mitchell W."/>
            <person name="Stoddard S."/>
            <person name="Schwarz W."/>
            <person name="Qureshi N."/>
            <person name="Young M."/>
            <person name="Shi Z."/>
            <person name="Ezeji T."/>
            <person name="White B."/>
            <person name="Blaschek H."/>
            <person name="Richardson P."/>
        </authorList>
    </citation>
    <scope>NUCLEOTIDE SEQUENCE [LARGE SCALE GENOMIC DNA]</scope>
    <source>
        <strain>ATCC 51743 / NCIMB 8052</strain>
    </source>
</reference>
<keyword id="KW-0687">Ribonucleoprotein</keyword>
<keyword id="KW-0689">Ribosomal protein</keyword>
<name>RL7_CLOB8</name>
<organism>
    <name type="scientific">Clostridium beijerinckii (strain ATCC 51743 / NCIMB 8052)</name>
    <name type="common">Clostridium acetobutylicum</name>
    <dbReference type="NCBI Taxonomy" id="290402"/>
    <lineage>
        <taxon>Bacteria</taxon>
        <taxon>Bacillati</taxon>
        <taxon>Bacillota</taxon>
        <taxon>Clostridia</taxon>
        <taxon>Eubacteriales</taxon>
        <taxon>Clostridiaceae</taxon>
        <taxon>Clostridium</taxon>
    </lineage>
</organism>
<dbReference type="EMBL" id="CP000721">
    <property type="protein sequence ID" value="ABR32333.1"/>
    <property type="molecule type" value="Genomic_DNA"/>
</dbReference>
<dbReference type="RefSeq" id="WP_011967505.1">
    <property type="nucleotide sequence ID" value="NC_009617.1"/>
</dbReference>
<dbReference type="SMR" id="A6LPQ3"/>
<dbReference type="GeneID" id="66343033"/>
<dbReference type="KEGG" id="cbe:Cbei_0143"/>
<dbReference type="eggNOG" id="COG0222">
    <property type="taxonomic scope" value="Bacteria"/>
</dbReference>
<dbReference type="HOGENOM" id="CLU_086499_3_2_9"/>
<dbReference type="Proteomes" id="UP000000565">
    <property type="component" value="Chromosome"/>
</dbReference>
<dbReference type="GO" id="GO:0022625">
    <property type="term" value="C:cytosolic large ribosomal subunit"/>
    <property type="evidence" value="ECO:0007669"/>
    <property type="project" value="TreeGrafter"/>
</dbReference>
<dbReference type="GO" id="GO:0003729">
    <property type="term" value="F:mRNA binding"/>
    <property type="evidence" value="ECO:0007669"/>
    <property type="project" value="TreeGrafter"/>
</dbReference>
<dbReference type="GO" id="GO:0003735">
    <property type="term" value="F:structural constituent of ribosome"/>
    <property type="evidence" value="ECO:0007669"/>
    <property type="project" value="InterPro"/>
</dbReference>
<dbReference type="GO" id="GO:0006412">
    <property type="term" value="P:translation"/>
    <property type="evidence" value="ECO:0007669"/>
    <property type="project" value="UniProtKB-UniRule"/>
</dbReference>
<dbReference type="CDD" id="cd00387">
    <property type="entry name" value="Ribosomal_L7_L12"/>
    <property type="match status" value="1"/>
</dbReference>
<dbReference type="FunFam" id="3.30.1390.10:FF:000001">
    <property type="entry name" value="50S ribosomal protein L7/L12"/>
    <property type="match status" value="1"/>
</dbReference>
<dbReference type="Gene3D" id="3.30.1390.10">
    <property type="match status" value="1"/>
</dbReference>
<dbReference type="Gene3D" id="1.20.5.710">
    <property type="entry name" value="Single helix bin"/>
    <property type="match status" value="1"/>
</dbReference>
<dbReference type="HAMAP" id="MF_00368">
    <property type="entry name" value="Ribosomal_bL12"/>
    <property type="match status" value="1"/>
</dbReference>
<dbReference type="InterPro" id="IPR000206">
    <property type="entry name" value="Ribosomal_bL12"/>
</dbReference>
<dbReference type="InterPro" id="IPR013823">
    <property type="entry name" value="Ribosomal_bL12_C"/>
</dbReference>
<dbReference type="InterPro" id="IPR014719">
    <property type="entry name" value="Ribosomal_bL12_C/ClpS-like"/>
</dbReference>
<dbReference type="InterPro" id="IPR008932">
    <property type="entry name" value="Ribosomal_bL12_oligo"/>
</dbReference>
<dbReference type="InterPro" id="IPR036235">
    <property type="entry name" value="Ribosomal_bL12_oligo_N_sf"/>
</dbReference>
<dbReference type="NCBIfam" id="TIGR00855">
    <property type="entry name" value="L12"/>
    <property type="match status" value="1"/>
</dbReference>
<dbReference type="PANTHER" id="PTHR45987">
    <property type="entry name" value="39S RIBOSOMAL PROTEIN L12"/>
    <property type="match status" value="1"/>
</dbReference>
<dbReference type="PANTHER" id="PTHR45987:SF4">
    <property type="entry name" value="LARGE RIBOSOMAL SUBUNIT PROTEIN BL12M"/>
    <property type="match status" value="1"/>
</dbReference>
<dbReference type="Pfam" id="PF00542">
    <property type="entry name" value="Ribosomal_L12"/>
    <property type="match status" value="1"/>
</dbReference>
<dbReference type="Pfam" id="PF16320">
    <property type="entry name" value="Ribosomal_L12_N"/>
    <property type="match status" value="1"/>
</dbReference>
<dbReference type="SUPFAM" id="SSF54736">
    <property type="entry name" value="ClpS-like"/>
    <property type="match status" value="1"/>
</dbReference>
<dbReference type="SUPFAM" id="SSF48300">
    <property type="entry name" value="Ribosomal protein L7/12, oligomerisation (N-terminal) domain"/>
    <property type="match status" value="1"/>
</dbReference>
<evidence type="ECO:0000255" key="1">
    <source>
        <dbReference type="HAMAP-Rule" id="MF_00368"/>
    </source>
</evidence>
<evidence type="ECO:0000305" key="2"/>
<comment type="function">
    <text evidence="1">Forms part of the ribosomal stalk which helps the ribosome interact with GTP-bound translation factors. Is thus essential for accurate translation.</text>
</comment>
<comment type="subunit">
    <text evidence="1">Homodimer. Part of the ribosomal stalk of the 50S ribosomal subunit. Forms a multimeric L10(L12)X complex, where L10 forms an elongated spine to which 2 to 4 L12 dimers bind in a sequential fashion. Binds GTP-bound translation factors.</text>
</comment>
<comment type="similarity">
    <text evidence="1">Belongs to the bacterial ribosomal protein bL12 family.</text>
</comment>
<protein>
    <recommendedName>
        <fullName evidence="1">Large ribosomal subunit protein bL12</fullName>
    </recommendedName>
    <alternativeName>
        <fullName evidence="2">50S ribosomal protein L7/L12</fullName>
    </alternativeName>
</protein>
<sequence>MTREEIIQAIKEMSVLDLNELVKACEEEFGVSAAAAVVAGGAVAGGAAAEEKTEFDVVLASAGDNKIKVIKVVREITGLGLKEAKEIVDGAPKTLKEGVSKDEAEDMKAKLAEVGATAEVK</sequence>